<feature type="chain" id="PRO_1000004093" description="Small ribosomal subunit protein uS2">
    <location>
        <begin position="1"/>
        <end position="260"/>
    </location>
</feature>
<accession>A3CQW3</accession>
<protein>
    <recommendedName>
        <fullName evidence="1">Small ribosomal subunit protein uS2</fullName>
    </recommendedName>
    <alternativeName>
        <fullName evidence="2">30S ribosomal protein S2</fullName>
    </alternativeName>
</protein>
<organism>
    <name type="scientific">Streptococcus sanguinis (strain SK36)</name>
    <dbReference type="NCBI Taxonomy" id="388919"/>
    <lineage>
        <taxon>Bacteria</taxon>
        <taxon>Bacillati</taxon>
        <taxon>Bacillota</taxon>
        <taxon>Bacilli</taxon>
        <taxon>Lactobacillales</taxon>
        <taxon>Streptococcaceae</taxon>
        <taxon>Streptococcus</taxon>
    </lineage>
</organism>
<keyword id="KW-1185">Reference proteome</keyword>
<keyword id="KW-0687">Ribonucleoprotein</keyword>
<keyword id="KW-0689">Ribosomal protein</keyword>
<gene>
    <name evidence="1" type="primary">rpsB</name>
    <name type="ordered locus">SSA_2203</name>
</gene>
<name>RS2_STRSV</name>
<comment type="similarity">
    <text evidence="1">Belongs to the universal ribosomal protein uS2 family.</text>
</comment>
<evidence type="ECO:0000255" key="1">
    <source>
        <dbReference type="HAMAP-Rule" id="MF_00291"/>
    </source>
</evidence>
<evidence type="ECO:0000305" key="2"/>
<sequence length="260" mass="29133">MAVISMKQLLEAGVHFGHQTRRWNPKMAKYIFTERNGIHVIDLQQTVKYADQAYDFMRDAAANDAVILFVGTKKQAADAVKEEAERSGQYFINHRWLGGTLTNWSTIQKRVARLKEIKRMEEDGTFEVLPKKEVALLNKQRARLEKFLGGIEDMPRIPDVMYVVDPHKEQIAVKEAKKLGIPVVAMVDTNTDPDDIDVIIPANDDAIRAVKLITAKMADAVIEGRQGEDSVESVEAELAATETQADSIEEIVEVVEGSNE</sequence>
<proteinExistence type="inferred from homology"/>
<dbReference type="EMBL" id="CP000387">
    <property type="protein sequence ID" value="ABN45568.1"/>
    <property type="molecule type" value="Genomic_DNA"/>
</dbReference>
<dbReference type="RefSeq" id="WP_002894015.1">
    <property type="nucleotide sequence ID" value="NC_009009.1"/>
</dbReference>
<dbReference type="RefSeq" id="YP_001036118.1">
    <property type="nucleotide sequence ID" value="NC_009009.1"/>
</dbReference>
<dbReference type="SMR" id="A3CQW3"/>
<dbReference type="STRING" id="388919.SSA_2203"/>
<dbReference type="KEGG" id="ssa:SSA_2203"/>
<dbReference type="PATRIC" id="fig|388919.9.peg.2088"/>
<dbReference type="eggNOG" id="COG0052">
    <property type="taxonomic scope" value="Bacteria"/>
</dbReference>
<dbReference type="HOGENOM" id="CLU_040318_1_2_9"/>
<dbReference type="OrthoDB" id="9808036at2"/>
<dbReference type="Proteomes" id="UP000002148">
    <property type="component" value="Chromosome"/>
</dbReference>
<dbReference type="GO" id="GO:0022627">
    <property type="term" value="C:cytosolic small ribosomal subunit"/>
    <property type="evidence" value="ECO:0007669"/>
    <property type="project" value="TreeGrafter"/>
</dbReference>
<dbReference type="GO" id="GO:0003735">
    <property type="term" value="F:structural constituent of ribosome"/>
    <property type="evidence" value="ECO:0007669"/>
    <property type="project" value="InterPro"/>
</dbReference>
<dbReference type="GO" id="GO:0006412">
    <property type="term" value="P:translation"/>
    <property type="evidence" value="ECO:0007669"/>
    <property type="project" value="UniProtKB-UniRule"/>
</dbReference>
<dbReference type="CDD" id="cd01425">
    <property type="entry name" value="RPS2"/>
    <property type="match status" value="1"/>
</dbReference>
<dbReference type="FunFam" id="1.10.287.610:FF:000001">
    <property type="entry name" value="30S ribosomal protein S2"/>
    <property type="match status" value="1"/>
</dbReference>
<dbReference type="Gene3D" id="3.40.50.10490">
    <property type="entry name" value="Glucose-6-phosphate isomerase like protein, domain 1"/>
    <property type="match status" value="1"/>
</dbReference>
<dbReference type="Gene3D" id="1.10.287.610">
    <property type="entry name" value="Helix hairpin bin"/>
    <property type="match status" value="1"/>
</dbReference>
<dbReference type="HAMAP" id="MF_00291_B">
    <property type="entry name" value="Ribosomal_uS2_B"/>
    <property type="match status" value="1"/>
</dbReference>
<dbReference type="InterPro" id="IPR001865">
    <property type="entry name" value="Ribosomal_uS2"/>
</dbReference>
<dbReference type="InterPro" id="IPR005706">
    <property type="entry name" value="Ribosomal_uS2_bac/mit/plastid"/>
</dbReference>
<dbReference type="InterPro" id="IPR018130">
    <property type="entry name" value="Ribosomal_uS2_CS"/>
</dbReference>
<dbReference type="InterPro" id="IPR023591">
    <property type="entry name" value="Ribosomal_uS2_flav_dom_sf"/>
</dbReference>
<dbReference type="NCBIfam" id="TIGR01011">
    <property type="entry name" value="rpsB_bact"/>
    <property type="match status" value="1"/>
</dbReference>
<dbReference type="PANTHER" id="PTHR12534">
    <property type="entry name" value="30S RIBOSOMAL PROTEIN S2 PROKARYOTIC AND ORGANELLAR"/>
    <property type="match status" value="1"/>
</dbReference>
<dbReference type="PANTHER" id="PTHR12534:SF0">
    <property type="entry name" value="SMALL RIBOSOMAL SUBUNIT PROTEIN US2M"/>
    <property type="match status" value="1"/>
</dbReference>
<dbReference type="Pfam" id="PF00318">
    <property type="entry name" value="Ribosomal_S2"/>
    <property type="match status" value="1"/>
</dbReference>
<dbReference type="PRINTS" id="PR00395">
    <property type="entry name" value="RIBOSOMALS2"/>
</dbReference>
<dbReference type="SUPFAM" id="SSF52313">
    <property type="entry name" value="Ribosomal protein S2"/>
    <property type="match status" value="1"/>
</dbReference>
<dbReference type="PROSITE" id="PS00962">
    <property type="entry name" value="RIBOSOMAL_S2_1"/>
    <property type="match status" value="1"/>
</dbReference>
<reference key="1">
    <citation type="journal article" date="2007" name="J. Bacteriol.">
        <title>Genome of the opportunistic pathogen Streptococcus sanguinis.</title>
        <authorList>
            <person name="Xu P."/>
            <person name="Alves J.M."/>
            <person name="Kitten T."/>
            <person name="Brown A."/>
            <person name="Chen Z."/>
            <person name="Ozaki L.S."/>
            <person name="Manque P."/>
            <person name="Ge X."/>
            <person name="Serrano M.G."/>
            <person name="Puiu D."/>
            <person name="Hendricks S."/>
            <person name="Wang Y."/>
            <person name="Chaplin M.D."/>
            <person name="Akan D."/>
            <person name="Paik S."/>
            <person name="Peterson D.L."/>
            <person name="Macrina F.L."/>
            <person name="Buck G.A."/>
        </authorList>
    </citation>
    <scope>NUCLEOTIDE SEQUENCE [LARGE SCALE GENOMIC DNA]</scope>
    <source>
        <strain>SK36</strain>
    </source>
</reference>